<sequence>MKTKEVVDELTVKRAITRITYEIIERNKDLNKIVLAGIKTRGVFIAHRIQERLKQLENLSVPVVELDTKPFRDDVKSGEDTSLVSVDVTDREVILVDDVLYTGRTIRAAIDNIVGHGRPARVSLAVLVDRGHRELPIRPDYVGKNIPTSRSEEIIVEMTELDDQDRVLITEEA</sequence>
<protein>
    <recommendedName>
        <fullName evidence="1">Bifunctional protein PyrR</fullName>
    </recommendedName>
    <domain>
        <recommendedName>
            <fullName evidence="1">Pyrimidine operon regulatory protein</fullName>
        </recommendedName>
    </domain>
    <domain>
        <recommendedName>
            <fullName evidence="1">Uracil phosphoribosyltransferase</fullName>
            <shortName evidence="1">UPRTase</shortName>
            <ecNumber evidence="1">2.4.2.9</ecNumber>
        </recommendedName>
    </domain>
</protein>
<keyword id="KW-0328">Glycosyltransferase</keyword>
<keyword id="KW-0694">RNA-binding</keyword>
<keyword id="KW-0804">Transcription</keyword>
<keyword id="KW-0805">Transcription regulation</keyword>
<keyword id="KW-0806">Transcription termination</keyword>
<keyword id="KW-0808">Transferase</keyword>
<gene>
    <name evidence="1" type="primary">pyrR</name>
    <name type="ordered locus">SPP_1316</name>
</gene>
<accession>C1CL12</accession>
<comment type="function">
    <text evidence="1">Regulates transcriptional attenuation of the pyrimidine nucleotide (pyr) operon by binding in a uridine-dependent manner to specific sites on pyr mRNA. This disrupts an antiterminator hairpin in the RNA and favors formation of a downstream transcription terminator, leading to a reduced expression of downstream genes.</text>
</comment>
<comment type="function">
    <text evidence="1">Also displays a weak uracil phosphoribosyltransferase activity which is not physiologically significant.</text>
</comment>
<comment type="catalytic activity">
    <reaction evidence="1">
        <text>UMP + diphosphate = 5-phospho-alpha-D-ribose 1-diphosphate + uracil</text>
        <dbReference type="Rhea" id="RHEA:13017"/>
        <dbReference type="ChEBI" id="CHEBI:17568"/>
        <dbReference type="ChEBI" id="CHEBI:33019"/>
        <dbReference type="ChEBI" id="CHEBI:57865"/>
        <dbReference type="ChEBI" id="CHEBI:58017"/>
        <dbReference type="EC" id="2.4.2.9"/>
    </reaction>
</comment>
<comment type="subunit">
    <text evidence="1">Homodimer and homohexamer; in equilibrium.</text>
</comment>
<comment type="similarity">
    <text evidence="1">Belongs to the purine/pyrimidine phosphoribosyltransferase family. PyrR subfamily.</text>
</comment>
<evidence type="ECO:0000255" key="1">
    <source>
        <dbReference type="HAMAP-Rule" id="MF_01219"/>
    </source>
</evidence>
<dbReference type="EC" id="2.4.2.9" evidence="1"/>
<dbReference type="EMBL" id="CP000920">
    <property type="protein sequence ID" value="ACO21764.1"/>
    <property type="molecule type" value="Genomic_DNA"/>
</dbReference>
<dbReference type="RefSeq" id="WP_000850024.1">
    <property type="nucleotide sequence ID" value="NC_012467.1"/>
</dbReference>
<dbReference type="SMR" id="C1CL12"/>
<dbReference type="GeneID" id="45653435"/>
<dbReference type="KEGG" id="spp:SPP_1316"/>
<dbReference type="HOGENOM" id="CLU_094234_2_1_9"/>
<dbReference type="GO" id="GO:0003723">
    <property type="term" value="F:RNA binding"/>
    <property type="evidence" value="ECO:0007669"/>
    <property type="project" value="UniProtKB-UniRule"/>
</dbReference>
<dbReference type="GO" id="GO:0004845">
    <property type="term" value="F:uracil phosphoribosyltransferase activity"/>
    <property type="evidence" value="ECO:0007669"/>
    <property type="project" value="UniProtKB-UniRule"/>
</dbReference>
<dbReference type="GO" id="GO:0006353">
    <property type="term" value="P:DNA-templated transcription termination"/>
    <property type="evidence" value="ECO:0007669"/>
    <property type="project" value="UniProtKB-UniRule"/>
</dbReference>
<dbReference type="CDD" id="cd06223">
    <property type="entry name" value="PRTases_typeI"/>
    <property type="match status" value="1"/>
</dbReference>
<dbReference type="FunFam" id="3.40.50.2020:FF:000020">
    <property type="entry name" value="Bifunctional protein PyrR"/>
    <property type="match status" value="1"/>
</dbReference>
<dbReference type="Gene3D" id="3.40.50.2020">
    <property type="match status" value="1"/>
</dbReference>
<dbReference type="HAMAP" id="MF_01219">
    <property type="entry name" value="PyrR"/>
    <property type="match status" value="1"/>
</dbReference>
<dbReference type="InterPro" id="IPR000836">
    <property type="entry name" value="PRibTrfase_dom"/>
</dbReference>
<dbReference type="InterPro" id="IPR029057">
    <property type="entry name" value="PRTase-like"/>
</dbReference>
<dbReference type="InterPro" id="IPR023050">
    <property type="entry name" value="PyrR"/>
</dbReference>
<dbReference type="InterPro" id="IPR050137">
    <property type="entry name" value="PyrR_bifunctional"/>
</dbReference>
<dbReference type="NCBIfam" id="NF003548">
    <property type="entry name" value="PRK05205.1-4"/>
    <property type="match status" value="1"/>
</dbReference>
<dbReference type="NCBIfam" id="NF003549">
    <property type="entry name" value="PRK05205.1-5"/>
    <property type="match status" value="1"/>
</dbReference>
<dbReference type="PANTHER" id="PTHR11608">
    <property type="entry name" value="BIFUNCTIONAL PROTEIN PYRR"/>
    <property type="match status" value="1"/>
</dbReference>
<dbReference type="PANTHER" id="PTHR11608:SF0">
    <property type="entry name" value="BIFUNCTIONAL PROTEIN PYRR"/>
    <property type="match status" value="1"/>
</dbReference>
<dbReference type="Pfam" id="PF00156">
    <property type="entry name" value="Pribosyltran"/>
    <property type="match status" value="1"/>
</dbReference>
<dbReference type="SUPFAM" id="SSF53271">
    <property type="entry name" value="PRTase-like"/>
    <property type="match status" value="1"/>
</dbReference>
<proteinExistence type="inferred from homology"/>
<organism>
    <name type="scientific">Streptococcus pneumoniae (strain P1031)</name>
    <dbReference type="NCBI Taxonomy" id="488223"/>
    <lineage>
        <taxon>Bacteria</taxon>
        <taxon>Bacillati</taxon>
        <taxon>Bacillota</taxon>
        <taxon>Bacilli</taxon>
        <taxon>Lactobacillales</taxon>
        <taxon>Streptococcaceae</taxon>
        <taxon>Streptococcus</taxon>
    </lineage>
</organism>
<reference key="1">
    <citation type="journal article" date="2010" name="Genome Biol.">
        <title>Structure and dynamics of the pan-genome of Streptococcus pneumoniae and closely related species.</title>
        <authorList>
            <person name="Donati C."/>
            <person name="Hiller N.L."/>
            <person name="Tettelin H."/>
            <person name="Muzzi A."/>
            <person name="Croucher N.J."/>
            <person name="Angiuoli S.V."/>
            <person name="Oggioni M."/>
            <person name="Dunning Hotopp J.C."/>
            <person name="Hu F.Z."/>
            <person name="Riley D.R."/>
            <person name="Covacci A."/>
            <person name="Mitchell T.J."/>
            <person name="Bentley S.D."/>
            <person name="Kilian M."/>
            <person name="Ehrlich G.D."/>
            <person name="Rappuoli R."/>
            <person name="Moxon E.R."/>
            <person name="Masignani V."/>
        </authorList>
    </citation>
    <scope>NUCLEOTIDE SEQUENCE [LARGE SCALE GENOMIC DNA]</scope>
    <source>
        <strain>P1031</strain>
    </source>
</reference>
<name>PYRR_STRZP</name>
<feature type="chain" id="PRO_1000164858" description="Bifunctional protein PyrR">
    <location>
        <begin position="1"/>
        <end position="173"/>
    </location>
</feature>
<feature type="short sequence motif" description="PRPP-binding" evidence="1">
    <location>
        <begin position="93"/>
        <end position="105"/>
    </location>
</feature>